<comment type="subcellular location">
    <subcellularLocation>
        <location evidence="3">Cell membrane</location>
        <topology evidence="3">Multi-pass membrane protein</topology>
    </subcellularLocation>
</comment>
<comment type="induction">
    <text evidence="2">Expression is sigma Y-dependent. Induced upon nitrogen starvation.</text>
</comment>
<comment type="sequence caution" evidence="3">
    <conflict type="frameshift">
        <sequence resource="EMBL-CDS" id="BAA11738"/>
    </conflict>
</comment>
<organism>
    <name type="scientific">Bacillus subtilis (strain 168)</name>
    <dbReference type="NCBI Taxonomy" id="224308"/>
    <lineage>
        <taxon>Bacteria</taxon>
        <taxon>Bacillati</taxon>
        <taxon>Bacillota</taxon>
        <taxon>Bacilli</taxon>
        <taxon>Bacillales</taxon>
        <taxon>Bacillaceae</taxon>
        <taxon>Bacillus</taxon>
    </lineage>
</organism>
<name>YXLG_BACSU</name>
<gene>
    <name type="primary">yxlG</name>
    <name type="ordered locus">BSU38650</name>
</gene>
<protein>
    <recommendedName>
        <fullName>Uncharacterized transmembrane protein YxlG</fullName>
    </recommendedName>
</protein>
<reference key="1">
    <citation type="journal article" date="1996" name="Microbiology">
        <title>Sequencing of a 65 kb region of the Bacillus subtilis genome containing the lic and cel loci, and creation of a 177 kb contig covering the gnt-sacXY region.</title>
        <authorList>
            <person name="Yoshida K."/>
            <person name="Shindo K."/>
            <person name="Sano H."/>
            <person name="Seki S."/>
            <person name="Fujimura M."/>
            <person name="Yanai N."/>
            <person name="Miwa Y."/>
            <person name="Fujita Y."/>
        </authorList>
    </citation>
    <scope>NUCLEOTIDE SEQUENCE [GENOMIC DNA]</scope>
    <source>
        <strain>168 / BGSC1A1</strain>
    </source>
</reference>
<reference key="2">
    <citation type="journal article" date="1997" name="Nature">
        <title>The complete genome sequence of the Gram-positive bacterium Bacillus subtilis.</title>
        <authorList>
            <person name="Kunst F."/>
            <person name="Ogasawara N."/>
            <person name="Moszer I."/>
            <person name="Albertini A.M."/>
            <person name="Alloni G."/>
            <person name="Azevedo V."/>
            <person name="Bertero M.G."/>
            <person name="Bessieres P."/>
            <person name="Bolotin A."/>
            <person name="Borchert S."/>
            <person name="Borriss R."/>
            <person name="Boursier L."/>
            <person name="Brans A."/>
            <person name="Braun M."/>
            <person name="Brignell S.C."/>
            <person name="Bron S."/>
            <person name="Brouillet S."/>
            <person name="Bruschi C.V."/>
            <person name="Caldwell B."/>
            <person name="Capuano V."/>
            <person name="Carter N.M."/>
            <person name="Choi S.-K."/>
            <person name="Codani J.-J."/>
            <person name="Connerton I.F."/>
            <person name="Cummings N.J."/>
            <person name="Daniel R.A."/>
            <person name="Denizot F."/>
            <person name="Devine K.M."/>
            <person name="Duesterhoeft A."/>
            <person name="Ehrlich S.D."/>
            <person name="Emmerson P.T."/>
            <person name="Entian K.-D."/>
            <person name="Errington J."/>
            <person name="Fabret C."/>
            <person name="Ferrari E."/>
            <person name="Foulger D."/>
            <person name="Fritz C."/>
            <person name="Fujita M."/>
            <person name="Fujita Y."/>
            <person name="Fuma S."/>
            <person name="Galizzi A."/>
            <person name="Galleron N."/>
            <person name="Ghim S.-Y."/>
            <person name="Glaser P."/>
            <person name="Goffeau A."/>
            <person name="Golightly E.J."/>
            <person name="Grandi G."/>
            <person name="Guiseppi G."/>
            <person name="Guy B.J."/>
            <person name="Haga K."/>
            <person name="Haiech J."/>
            <person name="Harwood C.R."/>
            <person name="Henaut A."/>
            <person name="Hilbert H."/>
            <person name="Holsappel S."/>
            <person name="Hosono S."/>
            <person name="Hullo M.-F."/>
            <person name="Itaya M."/>
            <person name="Jones L.-M."/>
            <person name="Joris B."/>
            <person name="Karamata D."/>
            <person name="Kasahara Y."/>
            <person name="Klaerr-Blanchard M."/>
            <person name="Klein C."/>
            <person name="Kobayashi Y."/>
            <person name="Koetter P."/>
            <person name="Koningstein G."/>
            <person name="Krogh S."/>
            <person name="Kumano M."/>
            <person name="Kurita K."/>
            <person name="Lapidus A."/>
            <person name="Lardinois S."/>
            <person name="Lauber J."/>
            <person name="Lazarevic V."/>
            <person name="Lee S.-M."/>
            <person name="Levine A."/>
            <person name="Liu H."/>
            <person name="Masuda S."/>
            <person name="Mauel C."/>
            <person name="Medigue C."/>
            <person name="Medina N."/>
            <person name="Mellado R.P."/>
            <person name="Mizuno M."/>
            <person name="Moestl D."/>
            <person name="Nakai S."/>
            <person name="Noback M."/>
            <person name="Noone D."/>
            <person name="O'Reilly M."/>
            <person name="Ogawa K."/>
            <person name="Ogiwara A."/>
            <person name="Oudega B."/>
            <person name="Park S.-H."/>
            <person name="Parro V."/>
            <person name="Pohl T.M."/>
            <person name="Portetelle D."/>
            <person name="Porwollik S."/>
            <person name="Prescott A.M."/>
            <person name="Presecan E."/>
            <person name="Pujic P."/>
            <person name="Purnelle B."/>
            <person name="Rapoport G."/>
            <person name="Rey M."/>
            <person name="Reynolds S."/>
            <person name="Rieger M."/>
            <person name="Rivolta C."/>
            <person name="Rocha E."/>
            <person name="Roche B."/>
            <person name="Rose M."/>
            <person name="Sadaie Y."/>
            <person name="Sato T."/>
            <person name="Scanlan E."/>
            <person name="Schleich S."/>
            <person name="Schroeter R."/>
            <person name="Scoffone F."/>
            <person name="Sekiguchi J."/>
            <person name="Sekowska A."/>
            <person name="Seror S.J."/>
            <person name="Serror P."/>
            <person name="Shin B.-S."/>
            <person name="Soldo B."/>
            <person name="Sorokin A."/>
            <person name="Tacconi E."/>
            <person name="Takagi T."/>
            <person name="Takahashi H."/>
            <person name="Takemaru K."/>
            <person name="Takeuchi M."/>
            <person name="Tamakoshi A."/>
            <person name="Tanaka T."/>
            <person name="Terpstra P."/>
            <person name="Tognoni A."/>
            <person name="Tosato V."/>
            <person name="Uchiyama S."/>
            <person name="Vandenbol M."/>
            <person name="Vannier F."/>
            <person name="Vassarotti A."/>
            <person name="Viari A."/>
            <person name="Wambutt R."/>
            <person name="Wedler E."/>
            <person name="Wedler H."/>
            <person name="Weitzenegger T."/>
            <person name="Winters P."/>
            <person name="Wipat A."/>
            <person name="Yamamoto H."/>
            <person name="Yamane K."/>
            <person name="Yasumoto K."/>
            <person name="Yata K."/>
            <person name="Yoshida K."/>
            <person name="Yoshikawa H.-F."/>
            <person name="Zumstein E."/>
            <person name="Yoshikawa H."/>
            <person name="Danchin A."/>
        </authorList>
    </citation>
    <scope>NUCLEOTIDE SEQUENCE [LARGE SCALE GENOMIC DNA]</scope>
    <source>
        <strain>168</strain>
    </source>
</reference>
<reference key="3">
    <citation type="journal article" date="2009" name="Microbiology">
        <title>From a consortium sequence to a unified sequence: the Bacillus subtilis 168 reference genome a decade later.</title>
        <authorList>
            <person name="Barbe V."/>
            <person name="Cruveiller S."/>
            <person name="Kunst F."/>
            <person name="Lenoble P."/>
            <person name="Meurice G."/>
            <person name="Sekowska A."/>
            <person name="Vallenet D."/>
            <person name="Wang T."/>
            <person name="Moszer I."/>
            <person name="Medigue C."/>
            <person name="Danchin A."/>
        </authorList>
    </citation>
    <scope>SEQUENCE REVISION TO C-TERMINUS</scope>
</reference>
<reference key="4">
    <citation type="journal article" date="2003" name="J. Biochem.">
        <title>Organization and expression of the Bacillus subtilis sigY operon.</title>
        <authorList>
            <person name="Tojo S."/>
            <person name="Matsunaga M."/>
            <person name="Matsumoto T."/>
            <person name="Kang C.-M."/>
            <person name="Yamaguchi H."/>
            <person name="Asai K."/>
            <person name="Sadaie Y."/>
            <person name="Yoshida K."/>
            <person name="Fujita Y."/>
        </authorList>
    </citation>
    <scope>IDENTIFICATION</scope>
    <scope>INDUCTION</scope>
    <source>
        <strain>168</strain>
    </source>
</reference>
<keyword id="KW-1003">Cell membrane</keyword>
<keyword id="KW-0472">Membrane</keyword>
<keyword id="KW-1185">Reference proteome</keyword>
<keyword id="KW-0812">Transmembrane</keyword>
<keyword id="KW-1133">Transmembrane helix</keyword>
<proteinExistence type="evidence at transcript level"/>
<feature type="chain" id="PRO_0000360049" description="Uncharacterized transmembrane protein YxlG">
    <location>
        <begin position="1"/>
        <end position="258"/>
    </location>
</feature>
<feature type="transmembrane region" description="Helical" evidence="1">
    <location>
        <begin position="21"/>
        <end position="41"/>
    </location>
</feature>
<feature type="transmembrane region" description="Helical" evidence="1">
    <location>
        <begin position="73"/>
        <end position="93"/>
    </location>
</feature>
<feature type="transmembrane region" description="Helical" evidence="1">
    <location>
        <begin position="119"/>
        <end position="139"/>
    </location>
</feature>
<feature type="transmembrane region" description="Helical" evidence="1">
    <location>
        <begin position="153"/>
        <end position="173"/>
    </location>
</feature>
<feature type="transmembrane region" description="Helical" evidence="1">
    <location>
        <begin position="182"/>
        <end position="202"/>
    </location>
</feature>
<feature type="transmembrane region" description="Helical" evidence="1">
    <location>
        <begin position="229"/>
        <end position="249"/>
    </location>
</feature>
<evidence type="ECO:0000255" key="1"/>
<evidence type="ECO:0000269" key="2">
    <source>
    </source>
</evidence>
<evidence type="ECO:0000305" key="3"/>
<dbReference type="EMBL" id="D83026">
    <property type="protein sequence ID" value="BAA11738.1"/>
    <property type="status" value="ALT_FRAME"/>
    <property type="molecule type" value="Genomic_DNA"/>
</dbReference>
<dbReference type="EMBL" id="AL009126">
    <property type="protein sequence ID" value="CAB15891.2"/>
    <property type="molecule type" value="Genomic_DNA"/>
</dbReference>
<dbReference type="PIR" id="B70082">
    <property type="entry name" value="B70082"/>
</dbReference>
<dbReference type="RefSeq" id="NP_391744.2">
    <property type="nucleotide sequence ID" value="NC_000964.3"/>
</dbReference>
<dbReference type="RefSeq" id="WP_003243335.1">
    <property type="nucleotide sequence ID" value="NZ_OZ025638.1"/>
</dbReference>
<dbReference type="SMR" id="P94375"/>
<dbReference type="FunCoup" id="P94375">
    <property type="interactions" value="14"/>
</dbReference>
<dbReference type="STRING" id="224308.BSU38650"/>
<dbReference type="PaxDb" id="224308-BSU38650"/>
<dbReference type="EnsemblBacteria" id="CAB15891">
    <property type="protein sequence ID" value="CAB15891"/>
    <property type="gene ID" value="BSU_38650"/>
</dbReference>
<dbReference type="GeneID" id="937394"/>
<dbReference type="KEGG" id="bsu:BSU38650"/>
<dbReference type="PATRIC" id="fig|224308.179.peg.4184"/>
<dbReference type="eggNOG" id="COG1277">
    <property type="taxonomic scope" value="Bacteria"/>
</dbReference>
<dbReference type="InParanoid" id="P94375"/>
<dbReference type="OrthoDB" id="4187110at2"/>
<dbReference type="PhylomeDB" id="P94375"/>
<dbReference type="BioCyc" id="BSUB:BSU38650-MONOMER"/>
<dbReference type="Proteomes" id="UP000001570">
    <property type="component" value="Chromosome"/>
</dbReference>
<dbReference type="GO" id="GO:0005886">
    <property type="term" value="C:plasma membrane"/>
    <property type="evidence" value="ECO:0007669"/>
    <property type="project" value="UniProtKB-SubCell"/>
</dbReference>
<dbReference type="GO" id="GO:0140359">
    <property type="term" value="F:ABC-type transporter activity"/>
    <property type="evidence" value="ECO:0007669"/>
    <property type="project" value="InterPro"/>
</dbReference>
<dbReference type="InterPro" id="IPR032688">
    <property type="entry name" value="ABC2_NosY/YtrC-like"/>
</dbReference>
<dbReference type="PANTHER" id="PTHR37305">
    <property type="entry name" value="INTEGRAL MEMBRANE PROTEIN-RELATED"/>
    <property type="match status" value="1"/>
</dbReference>
<dbReference type="PANTHER" id="PTHR37305:SF1">
    <property type="entry name" value="MEMBRANE PROTEIN"/>
    <property type="match status" value="1"/>
</dbReference>
<dbReference type="Pfam" id="PF12679">
    <property type="entry name" value="ABC2_membrane_2"/>
    <property type="match status" value="1"/>
</dbReference>
<sequence>MKVMMALLQKEWLEGWKSGKLIWLPIAMMIVGLTQPLTIYYMPEIIAHGGNLPDGMKISFTMPSGSEVMVSTLSQFNTLGMALVIFSVMGSVANERNQGVTALIMSRPVTAAHYIVSKWLIQSVIGIMSFAAGYGLAYYYVRLLFEDASFSRFAASLGLYALWVIFIVTAGLAGSTIFRSVGAAAACGIGLTAAVSFAVSLFPDGAKWLPAEICKQAEHILLHGERADFFGWSLTFSILCIMLLAVFSVWRFRRYESY</sequence>
<accession>P94375</accession>
<accession>Q794Y5</accession>